<feature type="chain" id="PRO_1000192728" description="Probable cytosol aminopeptidase">
    <location>
        <begin position="1"/>
        <end position="503"/>
    </location>
</feature>
<feature type="active site" evidence="1">
    <location>
        <position position="281"/>
    </location>
</feature>
<feature type="active site" evidence="1">
    <location>
        <position position="355"/>
    </location>
</feature>
<feature type="binding site" evidence="1">
    <location>
        <position position="269"/>
    </location>
    <ligand>
        <name>Mn(2+)</name>
        <dbReference type="ChEBI" id="CHEBI:29035"/>
        <label>2</label>
    </ligand>
</feature>
<feature type="binding site" evidence="1">
    <location>
        <position position="274"/>
    </location>
    <ligand>
        <name>Mn(2+)</name>
        <dbReference type="ChEBI" id="CHEBI:29035"/>
        <label>1</label>
    </ligand>
</feature>
<feature type="binding site" evidence="1">
    <location>
        <position position="274"/>
    </location>
    <ligand>
        <name>Mn(2+)</name>
        <dbReference type="ChEBI" id="CHEBI:29035"/>
        <label>2</label>
    </ligand>
</feature>
<feature type="binding site" evidence="1">
    <location>
        <position position="292"/>
    </location>
    <ligand>
        <name>Mn(2+)</name>
        <dbReference type="ChEBI" id="CHEBI:29035"/>
        <label>2</label>
    </ligand>
</feature>
<feature type="binding site" evidence="1">
    <location>
        <position position="351"/>
    </location>
    <ligand>
        <name>Mn(2+)</name>
        <dbReference type="ChEBI" id="CHEBI:29035"/>
        <label>1</label>
    </ligand>
</feature>
<feature type="binding site" evidence="1">
    <location>
        <position position="353"/>
    </location>
    <ligand>
        <name>Mn(2+)</name>
        <dbReference type="ChEBI" id="CHEBI:29035"/>
        <label>1</label>
    </ligand>
</feature>
<feature type="binding site" evidence="1">
    <location>
        <position position="353"/>
    </location>
    <ligand>
        <name>Mn(2+)</name>
        <dbReference type="ChEBI" id="CHEBI:29035"/>
        <label>2</label>
    </ligand>
</feature>
<comment type="function">
    <text evidence="1">Presumably involved in the processing and regular turnover of intracellular proteins. Catalyzes the removal of unsubstituted N-terminal amino acids from various peptides.</text>
</comment>
<comment type="catalytic activity">
    <reaction evidence="1">
        <text>Release of an N-terminal amino acid, Xaa-|-Yaa-, in which Xaa is preferably Leu, but may be other amino acids including Pro although not Arg or Lys, and Yaa may be Pro. Amino acid amides and methyl esters are also readily hydrolyzed, but rates on arylamides are exceedingly low.</text>
        <dbReference type="EC" id="3.4.11.1"/>
    </reaction>
</comment>
<comment type="catalytic activity">
    <reaction evidence="1">
        <text>Release of an N-terminal amino acid, preferentially leucine, but not glutamic or aspartic acids.</text>
        <dbReference type="EC" id="3.4.11.10"/>
    </reaction>
</comment>
<comment type="cofactor">
    <cofactor evidence="1">
        <name>Mn(2+)</name>
        <dbReference type="ChEBI" id="CHEBI:29035"/>
    </cofactor>
    <text evidence="1">Binds 2 manganese ions per subunit.</text>
</comment>
<comment type="subcellular location">
    <subcellularLocation>
        <location evidence="1">Cytoplasm</location>
    </subcellularLocation>
</comment>
<comment type="similarity">
    <text evidence="1">Belongs to the peptidase M17 family.</text>
</comment>
<name>AMPA_VIBCM</name>
<gene>
    <name evidence="1" type="primary">pepA</name>
    <name type="ordered locus">VCM66_2423</name>
</gene>
<sequence length="503" mass="54618">MEFSVKSGSPEKQRSACIVVGVFEPRRLSPVAEQLDKISDGYISSLLRRGDLEGKPGQMLLLHQVPGVLSERVLLVGCGKERELGERQYKEIIQKTINTLNETGSMEAVCFLTELHVKGRDTYWKVRQAVEATKDGLYIFDQFKSVKPEIRRPLRKLVFNVPTRRELNLGERAITHGLAISSGVKACKDLGNMPPNIANPAYLASQARRLADDYESITTKIIGEEEMEKLGMASYLAVGRGSRNESMMSVIEYKGNPDPEAKPIVLVGKGLTFDSGGISLKPGEGMDEMKYDMCGAASVFGTMKAIAKLGLPLNVIGVLAGCENMPGSNAYRPGDILTTMSGQTVEVLNTDAEGRLVLCDVLTYVERFEPECVVDVATLTGACVIALGHHISAVMSNHNPLAHELVNASEQSSDRAWRLPLADEYHEQLKSPFADMANIGGRPGGAITAACFLSKFAKKYNWAHLDIAGTAWKSGAAKGSTGRPVSLLVQFLLNRSGGLDAEE</sequence>
<organism>
    <name type="scientific">Vibrio cholerae serotype O1 (strain M66-2)</name>
    <dbReference type="NCBI Taxonomy" id="579112"/>
    <lineage>
        <taxon>Bacteria</taxon>
        <taxon>Pseudomonadati</taxon>
        <taxon>Pseudomonadota</taxon>
        <taxon>Gammaproteobacteria</taxon>
        <taxon>Vibrionales</taxon>
        <taxon>Vibrionaceae</taxon>
        <taxon>Vibrio</taxon>
    </lineage>
</organism>
<accession>C3LR42</accession>
<keyword id="KW-0031">Aminopeptidase</keyword>
<keyword id="KW-0963">Cytoplasm</keyword>
<keyword id="KW-0378">Hydrolase</keyword>
<keyword id="KW-0464">Manganese</keyword>
<keyword id="KW-0479">Metal-binding</keyword>
<keyword id="KW-0645">Protease</keyword>
<reference key="1">
    <citation type="journal article" date="2008" name="PLoS ONE">
        <title>A recalibrated molecular clock and independent origins for the cholera pandemic clones.</title>
        <authorList>
            <person name="Feng L."/>
            <person name="Reeves P.R."/>
            <person name="Lan R."/>
            <person name="Ren Y."/>
            <person name="Gao C."/>
            <person name="Zhou Z."/>
            <person name="Ren Y."/>
            <person name="Cheng J."/>
            <person name="Wang W."/>
            <person name="Wang J."/>
            <person name="Qian W."/>
            <person name="Li D."/>
            <person name="Wang L."/>
        </authorList>
    </citation>
    <scope>NUCLEOTIDE SEQUENCE [LARGE SCALE GENOMIC DNA]</scope>
    <source>
        <strain>M66-2</strain>
    </source>
</reference>
<evidence type="ECO:0000255" key="1">
    <source>
        <dbReference type="HAMAP-Rule" id="MF_00181"/>
    </source>
</evidence>
<proteinExistence type="inferred from homology"/>
<protein>
    <recommendedName>
        <fullName evidence="1">Probable cytosol aminopeptidase</fullName>
        <ecNumber evidence="1">3.4.11.1</ecNumber>
    </recommendedName>
    <alternativeName>
        <fullName evidence="1">Leucine aminopeptidase</fullName>
        <shortName evidence="1">LAP</shortName>
        <ecNumber evidence="1">3.4.11.10</ecNumber>
    </alternativeName>
    <alternativeName>
        <fullName evidence="1">Leucyl aminopeptidase</fullName>
    </alternativeName>
</protein>
<dbReference type="EC" id="3.4.11.1" evidence="1"/>
<dbReference type="EC" id="3.4.11.10" evidence="1"/>
<dbReference type="EMBL" id="CP001233">
    <property type="protein sequence ID" value="ACP06720.1"/>
    <property type="molecule type" value="Genomic_DNA"/>
</dbReference>
<dbReference type="RefSeq" id="WP_000397172.1">
    <property type="nucleotide sequence ID" value="NC_012578.1"/>
</dbReference>
<dbReference type="SMR" id="C3LR42"/>
<dbReference type="MEROPS" id="M17.003"/>
<dbReference type="GeneID" id="88785064"/>
<dbReference type="KEGG" id="vcm:VCM66_2423"/>
<dbReference type="HOGENOM" id="CLU_013734_2_2_6"/>
<dbReference type="Proteomes" id="UP000001217">
    <property type="component" value="Chromosome I"/>
</dbReference>
<dbReference type="GO" id="GO:0005737">
    <property type="term" value="C:cytoplasm"/>
    <property type="evidence" value="ECO:0007669"/>
    <property type="project" value="UniProtKB-SubCell"/>
</dbReference>
<dbReference type="GO" id="GO:0030145">
    <property type="term" value="F:manganese ion binding"/>
    <property type="evidence" value="ECO:0007669"/>
    <property type="project" value="UniProtKB-UniRule"/>
</dbReference>
<dbReference type="GO" id="GO:0070006">
    <property type="term" value="F:metalloaminopeptidase activity"/>
    <property type="evidence" value="ECO:0007669"/>
    <property type="project" value="InterPro"/>
</dbReference>
<dbReference type="GO" id="GO:0006508">
    <property type="term" value="P:proteolysis"/>
    <property type="evidence" value="ECO:0007669"/>
    <property type="project" value="UniProtKB-KW"/>
</dbReference>
<dbReference type="CDD" id="cd00433">
    <property type="entry name" value="Peptidase_M17"/>
    <property type="match status" value="1"/>
</dbReference>
<dbReference type="FunFam" id="3.40.220.10:FF:000001">
    <property type="entry name" value="Probable cytosol aminopeptidase"/>
    <property type="match status" value="1"/>
</dbReference>
<dbReference type="FunFam" id="3.40.630.10:FF:000004">
    <property type="entry name" value="Probable cytosol aminopeptidase"/>
    <property type="match status" value="1"/>
</dbReference>
<dbReference type="Gene3D" id="3.40.220.10">
    <property type="entry name" value="Leucine Aminopeptidase, subunit E, domain 1"/>
    <property type="match status" value="1"/>
</dbReference>
<dbReference type="Gene3D" id="3.40.630.10">
    <property type="entry name" value="Zn peptidases"/>
    <property type="match status" value="1"/>
</dbReference>
<dbReference type="HAMAP" id="MF_00181">
    <property type="entry name" value="Cytosol_peptidase_M17"/>
    <property type="match status" value="1"/>
</dbReference>
<dbReference type="InterPro" id="IPR011356">
    <property type="entry name" value="Leucine_aapep/pepB"/>
</dbReference>
<dbReference type="InterPro" id="IPR043472">
    <property type="entry name" value="Macro_dom-like"/>
</dbReference>
<dbReference type="InterPro" id="IPR000819">
    <property type="entry name" value="Peptidase_M17_C"/>
</dbReference>
<dbReference type="InterPro" id="IPR023042">
    <property type="entry name" value="Peptidase_M17_leu_NH2_pept"/>
</dbReference>
<dbReference type="InterPro" id="IPR008283">
    <property type="entry name" value="Peptidase_M17_N"/>
</dbReference>
<dbReference type="NCBIfam" id="NF002072">
    <property type="entry name" value="PRK00913.1-1"/>
    <property type="match status" value="1"/>
</dbReference>
<dbReference type="NCBIfam" id="NF002074">
    <property type="entry name" value="PRK00913.1-4"/>
    <property type="match status" value="1"/>
</dbReference>
<dbReference type="PANTHER" id="PTHR11963:SF23">
    <property type="entry name" value="CYTOSOL AMINOPEPTIDASE"/>
    <property type="match status" value="1"/>
</dbReference>
<dbReference type="PANTHER" id="PTHR11963">
    <property type="entry name" value="LEUCINE AMINOPEPTIDASE-RELATED"/>
    <property type="match status" value="1"/>
</dbReference>
<dbReference type="Pfam" id="PF00883">
    <property type="entry name" value="Peptidase_M17"/>
    <property type="match status" value="1"/>
</dbReference>
<dbReference type="Pfam" id="PF02789">
    <property type="entry name" value="Peptidase_M17_N"/>
    <property type="match status" value="1"/>
</dbReference>
<dbReference type="PRINTS" id="PR00481">
    <property type="entry name" value="LAMNOPPTDASE"/>
</dbReference>
<dbReference type="SUPFAM" id="SSF52949">
    <property type="entry name" value="Macro domain-like"/>
    <property type="match status" value="1"/>
</dbReference>
<dbReference type="SUPFAM" id="SSF53187">
    <property type="entry name" value="Zn-dependent exopeptidases"/>
    <property type="match status" value="1"/>
</dbReference>
<dbReference type="PROSITE" id="PS00631">
    <property type="entry name" value="CYTOSOL_AP"/>
    <property type="match status" value="1"/>
</dbReference>